<gene>
    <name type="primary">MYLK</name>
</gene>
<organism>
    <name type="scientific">Sus scrofa</name>
    <name type="common">Pig</name>
    <dbReference type="NCBI Taxonomy" id="9823"/>
    <lineage>
        <taxon>Eukaryota</taxon>
        <taxon>Metazoa</taxon>
        <taxon>Chordata</taxon>
        <taxon>Craniata</taxon>
        <taxon>Vertebrata</taxon>
        <taxon>Euteleostomi</taxon>
        <taxon>Mammalia</taxon>
        <taxon>Eutheria</taxon>
        <taxon>Laurasiatheria</taxon>
        <taxon>Artiodactyla</taxon>
        <taxon>Suina</taxon>
        <taxon>Suidae</taxon>
        <taxon>Sus</taxon>
    </lineage>
</organism>
<comment type="function">
    <text evidence="1">Phosphorylates a specific serine in the N-terminus of a myosin light chain. Also regulates actin-myosin interaction through a non-kinase activity (By similarity).</text>
</comment>
<comment type="catalytic activity">
    <reaction>
        <text>L-seryl-[myosin light chain] + ATP = O-phospho-L-seryl-[myosin light chain] + ADP + H(+)</text>
        <dbReference type="Rhea" id="RHEA:22004"/>
        <dbReference type="Rhea" id="RHEA-COMP:13684"/>
        <dbReference type="Rhea" id="RHEA-COMP:13685"/>
        <dbReference type="ChEBI" id="CHEBI:15378"/>
        <dbReference type="ChEBI" id="CHEBI:29999"/>
        <dbReference type="ChEBI" id="CHEBI:30616"/>
        <dbReference type="ChEBI" id="CHEBI:83421"/>
        <dbReference type="ChEBI" id="CHEBI:456216"/>
        <dbReference type="EC" id="2.7.11.18"/>
    </reaction>
</comment>
<comment type="catalytic activity">
    <reaction>
        <text>L-threonyl-[myosin light chain] + ATP = O-phospho-L-threonyl-[myosin light chain] + ADP + H(+)</text>
        <dbReference type="Rhea" id="RHEA:53900"/>
        <dbReference type="Rhea" id="RHEA-COMP:13686"/>
        <dbReference type="Rhea" id="RHEA-COMP:13687"/>
        <dbReference type="ChEBI" id="CHEBI:15378"/>
        <dbReference type="ChEBI" id="CHEBI:30013"/>
        <dbReference type="ChEBI" id="CHEBI:30616"/>
        <dbReference type="ChEBI" id="CHEBI:61977"/>
        <dbReference type="ChEBI" id="CHEBI:456216"/>
        <dbReference type="EC" id="2.7.11.18"/>
    </reaction>
</comment>
<comment type="subunit">
    <text evidence="1">Interacts with SVIL.</text>
</comment>
<comment type="PTM">
    <text evidence="1">The C-terminus is deglutamylated by AGTPBP1/CCP1, AGBL1/CCP4 and AGBL4/CCP6, leading to the formation of Myosin light chain kinase, smooth muscle, deglutamylated form. The consequences of C-terminal deglutamylation are unknown (By similarity).</text>
</comment>
<comment type="similarity">
    <text evidence="3">Belongs to the protein kinase superfamily. CAMK Ser/Thr protein kinase family.</text>
</comment>
<protein>
    <recommendedName>
        <fullName>Myosin light chain kinase, smooth muscle</fullName>
        <shortName>MLCK</shortName>
        <ecNumber>2.7.11.18</ecNumber>
    </recommendedName>
</protein>
<reference key="1">
    <citation type="submission" date="1996-12" db="EMBL/GenBank/DDBJ databases">
        <authorList>
            <person name="Sakihara C."/>
        </authorList>
    </citation>
    <scope>NUCLEOTIDE SEQUENCE [MRNA]</scope>
    <source>
        <tissue>Pulmonary artery</tissue>
    </source>
</reference>
<feature type="chain" id="PRO_0000086406" description="Myosin light chain kinase, smooth muscle">
    <location>
        <begin position="1" status="less than"/>
        <end position="139" status="greater than"/>
    </location>
</feature>
<feature type="region of interest" description="Disordered" evidence="2">
    <location>
        <begin position="48"/>
        <end position="97"/>
    </location>
</feature>
<feature type="non-terminal residue">
    <location>
        <position position="1"/>
    </location>
</feature>
<feature type="non-terminal residue">
    <location>
        <position position="139"/>
    </location>
</feature>
<sequence>FIVLSQEGSLCSISIEKALPEDRGLYKCVAKNSAGQAECSCQVTVDDAPTGENAKAPEMKARRPKSSLPPVLGTESDATVKKKPAPKTPPKAAMPPQIIQFPEDQKVRAGESVELFGKVAGTQPITCTWMKFRKQIQES</sequence>
<dbReference type="EC" id="2.7.11.18"/>
<dbReference type="EMBL" id="D89497">
    <property type="protein sequence ID" value="BAA13970.1"/>
    <property type="molecule type" value="mRNA"/>
</dbReference>
<dbReference type="STRING" id="9823.ENSSSCP00000040501"/>
<dbReference type="PaxDb" id="9823-ENSSSCP00000012639"/>
<dbReference type="PeptideAtlas" id="P79280"/>
<dbReference type="eggNOG" id="KOG0613">
    <property type="taxonomic scope" value="Eukaryota"/>
</dbReference>
<dbReference type="InParanoid" id="P79280"/>
<dbReference type="ChiTaRS" id="MYLK">
    <property type="organism name" value="pig"/>
</dbReference>
<dbReference type="Proteomes" id="UP000008227">
    <property type="component" value="Unplaced"/>
</dbReference>
<dbReference type="Proteomes" id="UP000314985">
    <property type="component" value="Unplaced"/>
</dbReference>
<dbReference type="Proteomes" id="UP000694570">
    <property type="component" value="Unplaced"/>
</dbReference>
<dbReference type="Proteomes" id="UP000694571">
    <property type="component" value="Unplaced"/>
</dbReference>
<dbReference type="Proteomes" id="UP000694720">
    <property type="component" value="Unplaced"/>
</dbReference>
<dbReference type="Proteomes" id="UP000694722">
    <property type="component" value="Unplaced"/>
</dbReference>
<dbReference type="Proteomes" id="UP000694723">
    <property type="component" value="Unplaced"/>
</dbReference>
<dbReference type="Proteomes" id="UP000694724">
    <property type="component" value="Unplaced"/>
</dbReference>
<dbReference type="Proteomes" id="UP000694725">
    <property type="component" value="Unplaced"/>
</dbReference>
<dbReference type="Proteomes" id="UP000694726">
    <property type="component" value="Unplaced"/>
</dbReference>
<dbReference type="Proteomes" id="UP000694727">
    <property type="component" value="Unplaced"/>
</dbReference>
<dbReference type="Proteomes" id="UP000694728">
    <property type="component" value="Unplaced"/>
</dbReference>
<dbReference type="GO" id="GO:0003779">
    <property type="term" value="F:actin binding"/>
    <property type="evidence" value="ECO:0007669"/>
    <property type="project" value="UniProtKB-KW"/>
</dbReference>
<dbReference type="GO" id="GO:0005524">
    <property type="term" value="F:ATP binding"/>
    <property type="evidence" value="ECO:0007669"/>
    <property type="project" value="UniProtKB-KW"/>
</dbReference>
<dbReference type="GO" id="GO:0005516">
    <property type="term" value="F:calmodulin binding"/>
    <property type="evidence" value="ECO:0007669"/>
    <property type="project" value="UniProtKB-KW"/>
</dbReference>
<dbReference type="GO" id="GO:0004687">
    <property type="term" value="F:myosin light chain kinase activity"/>
    <property type="evidence" value="ECO:0007669"/>
    <property type="project" value="UniProtKB-EC"/>
</dbReference>
<dbReference type="Gene3D" id="2.60.40.10">
    <property type="entry name" value="Immunoglobulins"/>
    <property type="match status" value="2"/>
</dbReference>
<dbReference type="InterPro" id="IPR036179">
    <property type="entry name" value="Ig-like_dom_sf"/>
</dbReference>
<dbReference type="InterPro" id="IPR013783">
    <property type="entry name" value="Ig-like_fold"/>
</dbReference>
<dbReference type="InterPro" id="IPR013098">
    <property type="entry name" value="Ig_I-set"/>
</dbReference>
<dbReference type="PANTHER" id="PTHR47633">
    <property type="entry name" value="IMMUNOGLOBULIN"/>
    <property type="match status" value="1"/>
</dbReference>
<dbReference type="PANTHER" id="PTHR47633:SF1">
    <property type="entry name" value="MYOSIN LIGHT CHAIN KINASE, SMOOTH MUSCLE"/>
    <property type="match status" value="1"/>
</dbReference>
<dbReference type="Pfam" id="PF07679">
    <property type="entry name" value="I-set"/>
    <property type="match status" value="2"/>
</dbReference>
<dbReference type="SUPFAM" id="SSF48726">
    <property type="entry name" value="Immunoglobulin"/>
    <property type="match status" value="2"/>
</dbReference>
<keyword id="KW-0009">Actin-binding</keyword>
<keyword id="KW-0067">ATP-binding</keyword>
<keyword id="KW-0112">Calmodulin-binding</keyword>
<keyword id="KW-0418">Kinase</keyword>
<keyword id="KW-0547">Nucleotide-binding</keyword>
<keyword id="KW-1185">Reference proteome</keyword>
<keyword id="KW-0723">Serine/threonine-protein kinase</keyword>
<keyword id="KW-0808">Transferase</keyword>
<accession>P79280</accession>
<evidence type="ECO:0000250" key="1"/>
<evidence type="ECO:0000256" key="2">
    <source>
        <dbReference type="SAM" id="MobiDB-lite"/>
    </source>
</evidence>
<evidence type="ECO:0000305" key="3"/>
<name>MYLK_PIG</name>
<proteinExistence type="evidence at transcript level"/>